<gene>
    <name evidence="6" type="primary">IQD11</name>
    <name evidence="8" type="ordered locus">At5g13460</name>
    <name evidence="9" type="ORF">T22N19.110</name>
</gene>
<feature type="chain" id="PRO_0000453118" description="Protein IQ-DOMAIN 11">
    <location>
        <begin position="1"/>
        <end position="443"/>
    </location>
</feature>
<feature type="domain" description="IQ 1" evidence="2">
    <location>
        <begin position="113"/>
        <end position="138"/>
    </location>
</feature>
<feature type="domain" description="IQ 2" evidence="2">
    <location>
        <begin position="139"/>
        <end position="161"/>
    </location>
</feature>
<feature type="region of interest" description="Calmodulin-binding" evidence="6">
    <location>
        <begin position="5"/>
        <end position="20"/>
    </location>
</feature>
<feature type="region of interest" description="Disordered" evidence="4">
    <location>
        <begin position="44"/>
        <end position="65"/>
    </location>
</feature>
<feature type="region of interest" description="Disordered" evidence="4">
    <location>
        <begin position="277"/>
        <end position="361"/>
    </location>
</feature>
<feature type="short sequence motif" description="Nuclear localization signal 1" evidence="3">
    <location>
        <begin position="11"/>
        <end position="18"/>
    </location>
</feature>
<feature type="short sequence motif" description="Nuclear localization signal 2" evidence="3">
    <location>
        <begin position="27"/>
        <end position="34"/>
    </location>
</feature>
<feature type="compositionally biased region" description="Basic and acidic residues" evidence="4">
    <location>
        <begin position="48"/>
        <end position="64"/>
    </location>
</feature>
<feature type="compositionally biased region" description="Basic and acidic residues" evidence="4">
    <location>
        <begin position="277"/>
        <end position="293"/>
    </location>
</feature>
<organism>
    <name type="scientific">Arabidopsis thaliana</name>
    <name type="common">Mouse-ear cress</name>
    <dbReference type="NCBI Taxonomy" id="3702"/>
    <lineage>
        <taxon>Eukaryota</taxon>
        <taxon>Viridiplantae</taxon>
        <taxon>Streptophyta</taxon>
        <taxon>Embryophyta</taxon>
        <taxon>Tracheophyta</taxon>
        <taxon>Spermatophyta</taxon>
        <taxon>Magnoliopsida</taxon>
        <taxon>eudicotyledons</taxon>
        <taxon>Gunneridae</taxon>
        <taxon>Pentapetalae</taxon>
        <taxon>rosids</taxon>
        <taxon>malvids</taxon>
        <taxon>Brassicales</taxon>
        <taxon>Brassicaceae</taxon>
        <taxon>Camelineae</taxon>
        <taxon>Arabidopsis</taxon>
    </lineage>
</organism>
<protein>
    <recommendedName>
        <fullName evidence="6">Protein IQ-DOMAIN 11</fullName>
        <shortName evidence="6">AtIQD11</shortName>
    </recommendedName>
</protein>
<evidence type="ECO:0000250" key="1">
    <source>
        <dbReference type="UniProtKB" id="Q9SF32"/>
    </source>
</evidence>
<evidence type="ECO:0000255" key="2">
    <source>
        <dbReference type="PROSITE-ProRule" id="PRU00116"/>
    </source>
</evidence>
<evidence type="ECO:0000255" key="3">
    <source>
        <dbReference type="PROSITE-ProRule" id="PRU00768"/>
    </source>
</evidence>
<evidence type="ECO:0000256" key="4">
    <source>
        <dbReference type="SAM" id="MobiDB-lite"/>
    </source>
</evidence>
<evidence type="ECO:0000269" key="5">
    <source>
    </source>
</evidence>
<evidence type="ECO:0000303" key="6">
    <source>
    </source>
</evidence>
<evidence type="ECO:0000305" key="7"/>
<evidence type="ECO:0000312" key="8">
    <source>
        <dbReference type="Araport" id="AT5G13460"/>
    </source>
</evidence>
<evidence type="ECO:0000312" key="9">
    <source>
        <dbReference type="EMBL" id="AED91897.1"/>
    </source>
</evidence>
<name>IQD11_ARATH</name>
<reference key="1">
    <citation type="journal article" date="2000" name="Nature">
        <title>Sequence and analysis of chromosome 5 of the plant Arabidopsis thaliana.</title>
        <authorList>
            <person name="Tabata S."/>
            <person name="Kaneko T."/>
            <person name="Nakamura Y."/>
            <person name="Kotani H."/>
            <person name="Kato T."/>
            <person name="Asamizu E."/>
            <person name="Miyajima N."/>
            <person name="Sasamoto S."/>
            <person name="Kimura T."/>
            <person name="Hosouchi T."/>
            <person name="Kawashima K."/>
            <person name="Kohara M."/>
            <person name="Matsumoto M."/>
            <person name="Matsuno A."/>
            <person name="Muraki A."/>
            <person name="Nakayama S."/>
            <person name="Nakazaki N."/>
            <person name="Naruo K."/>
            <person name="Okumura S."/>
            <person name="Shinpo S."/>
            <person name="Takeuchi C."/>
            <person name="Wada T."/>
            <person name="Watanabe A."/>
            <person name="Yamada M."/>
            <person name="Yasuda M."/>
            <person name="Sato S."/>
            <person name="de la Bastide M."/>
            <person name="Huang E."/>
            <person name="Spiegel L."/>
            <person name="Gnoj L."/>
            <person name="O'Shaughnessy A."/>
            <person name="Preston R."/>
            <person name="Habermann K."/>
            <person name="Murray J."/>
            <person name="Johnson D."/>
            <person name="Rohlfing T."/>
            <person name="Nelson J."/>
            <person name="Stoneking T."/>
            <person name="Pepin K."/>
            <person name="Spieth J."/>
            <person name="Sekhon M."/>
            <person name="Armstrong J."/>
            <person name="Becker M."/>
            <person name="Belter E."/>
            <person name="Cordum H."/>
            <person name="Cordes M."/>
            <person name="Courtney L."/>
            <person name="Courtney W."/>
            <person name="Dante M."/>
            <person name="Du H."/>
            <person name="Edwards J."/>
            <person name="Fryman J."/>
            <person name="Haakensen B."/>
            <person name="Lamar E."/>
            <person name="Latreille P."/>
            <person name="Leonard S."/>
            <person name="Meyer R."/>
            <person name="Mulvaney E."/>
            <person name="Ozersky P."/>
            <person name="Riley A."/>
            <person name="Strowmatt C."/>
            <person name="Wagner-McPherson C."/>
            <person name="Wollam A."/>
            <person name="Yoakum M."/>
            <person name="Bell M."/>
            <person name="Dedhia N."/>
            <person name="Parnell L."/>
            <person name="Shah R."/>
            <person name="Rodriguez M."/>
            <person name="Hoon See L."/>
            <person name="Vil D."/>
            <person name="Baker J."/>
            <person name="Kirchoff K."/>
            <person name="Toth K."/>
            <person name="King L."/>
            <person name="Bahret A."/>
            <person name="Miller B."/>
            <person name="Marra M.A."/>
            <person name="Martienssen R."/>
            <person name="McCombie W.R."/>
            <person name="Wilson R.K."/>
            <person name="Murphy G."/>
            <person name="Bancroft I."/>
            <person name="Volckaert G."/>
            <person name="Wambutt R."/>
            <person name="Duesterhoeft A."/>
            <person name="Stiekema W."/>
            <person name="Pohl T."/>
            <person name="Entian K.-D."/>
            <person name="Terryn N."/>
            <person name="Hartley N."/>
            <person name="Bent E."/>
            <person name="Johnson S."/>
            <person name="Langham S.-A."/>
            <person name="McCullagh B."/>
            <person name="Robben J."/>
            <person name="Grymonprez B."/>
            <person name="Zimmermann W."/>
            <person name="Ramsperger U."/>
            <person name="Wedler H."/>
            <person name="Balke K."/>
            <person name="Wedler E."/>
            <person name="Peters S."/>
            <person name="van Staveren M."/>
            <person name="Dirkse W."/>
            <person name="Mooijman P."/>
            <person name="Klein Lankhorst R."/>
            <person name="Weitzenegger T."/>
            <person name="Bothe G."/>
            <person name="Rose M."/>
            <person name="Hauf J."/>
            <person name="Berneiser S."/>
            <person name="Hempel S."/>
            <person name="Feldpausch M."/>
            <person name="Lamberth S."/>
            <person name="Villarroel R."/>
            <person name="Gielen J."/>
            <person name="Ardiles W."/>
            <person name="Bents O."/>
            <person name="Lemcke K."/>
            <person name="Kolesov G."/>
            <person name="Mayer K.F.X."/>
            <person name="Rudd S."/>
            <person name="Schoof H."/>
            <person name="Schueller C."/>
            <person name="Zaccaria P."/>
            <person name="Mewes H.-W."/>
            <person name="Bevan M."/>
            <person name="Fransz P.F."/>
        </authorList>
    </citation>
    <scope>NUCLEOTIDE SEQUENCE [LARGE SCALE GENOMIC DNA]</scope>
    <source>
        <strain>cv. Columbia</strain>
    </source>
</reference>
<reference key="2">
    <citation type="journal article" date="2017" name="Plant J.">
        <title>Araport11: a complete reannotation of the Arabidopsis thaliana reference genome.</title>
        <authorList>
            <person name="Cheng C.Y."/>
            <person name="Krishnakumar V."/>
            <person name="Chan A.P."/>
            <person name="Thibaud-Nissen F."/>
            <person name="Schobel S."/>
            <person name="Town C.D."/>
        </authorList>
    </citation>
    <scope>GENOME REANNOTATION</scope>
    <source>
        <strain>cv. Columbia</strain>
    </source>
</reference>
<reference key="3">
    <citation type="journal article" date="2003" name="Science">
        <title>Empirical analysis of transcriptional activity in the Arabidopsis genome.</title>
        <authorList>
            <person name="Yamada K."/>
            <person name="Lim J."/>
            <person name="Dale J.M."/>
            <person name="Chen H."/>
            <person name="Shinn P."/>
            <person name="Palm C.J."/>
            <person name="Southwick A.M."/>
            <person name="Wu H.C."/>
            <person name="Kim C.J."/>
            <person name="Nguyen M."/>
            <person name="Pham P.K."/>
            <person name="Cheuk R.F."/>
            <person name="Karlin-Newmann G."/>
            <person name="Liu S.X."/>
            <person name="Lam B."/>
            <person name="Sakano H."/>
            <person name="Wu T."/>
            <person name="Yu G."/>
            <person name="Miranda M."/>
            <person name="Quach H.L."/>
            <person name="Tripp M."/>
            <person name="Chang C.H."/>
            <person name="Lee J.M."/>
            <person name="Toriumi M.J."/>
            <person name="Chan M.M."/>
            <person name="Tang C.C."/>
            <person name="Onodera C.S."/>
            <person name="Deng J.M."/>
            <person name="Akiyama K."/>
            <person name="Ansari Y."/>
            <person name="Arakawa T."/>
            <person name="Banh J."/>
            <person name="Banno F."/>
            <person name="Bowser L."/>
            <person name="Brooks S.Y."/>
            <person name="Carninci P."/>
            <person name="Chao Q."/>
            <person name="Choy N."/>
            <person name="Enju A."/>
            <person name="Goldsmith A.D."/>
            <person name="Gurjal M."/>
            <person name="Hansen N.F."/>
            <person name="Hayashizaki Y."/>
            <person name="Johnson-Hopson C."/>
            <person name="Hsuan V.W."/>
            <person name="Iida K."/>
            <person name="Karnes M."/>
            <person name="Khan S."/>
            <person name="Koesema E."/>
            <person name="Ishida J."/>
            <person name="Jiang P.X."/>
            <person name="Jones T."/>
            <person name="Kawai J."/>
            <person name="Kamiya A."/>
            <person name="Meyers C."/>
            <person name="Nakajima M."/>
            <person name="Narusaka M."/>
            <person name="Seki M."/>
            <person name="Sakurai T."/>
            <person name="Satou M."/>
            <person name="Tamse R."/>
            <person name="Vaysberg M."/>
            <person name="Wallender E.K."/>
            <person name="Wong C."/>
            <person name="Yamamura Y."/>
            <person name="Yuan S."/>
            <person name="Shinozaki K."/>
            <person name="Davis R.W."/>
            <person name="Theologis A."/>
            <person name="Ecker J.R."/>
        </authorList>
    </citation>
    <scope>NUCLEOTIDE SEQUENCE [LARGE SCALE MRNA]</scope>
    <source>
        <strain>cv. Columbia</strain>
    </source>
</reference>
<reference key="4">
    <citation type="submission" date="2002-03" db="EMBL/GenBank/DDBJ databases">
        <title>Full-length cDNA from Arabidopsis thaliana.</title>
        <authorList>
            <person name="Brover V.V."/>
            <person name="Troukhan M.E."/>
            <person name="Alexandrov N.A."/>
            <person name="Lu Y.-P."/>
            <person name="Flavell R.B."/>
            <person name="Feldmann K.A."/>
        </authorList>
    </citation>
    <scope>NUCLEOTIDE SEQUENCE [LARGE SCALE MRNA]</scope>
</reference>
<reference key="5">
    <citation type="journal article" date="2005" name="BMC Evol. Biol.">
        <title>Genome-wide comparative analysis of the IQD gene families in Arabidopsis thaliana and Oryza sativa.</title>
        <authorList>
            <person name="Abel S."/>
            <person name="Savchenko T."/>
            <person name="Levy M."/>
        </authorList>
    </citation>
    <scope>INTERACTION WITH CALMODULIN</scope>
    <scope>GENE FAMILY</scope>
    <scope>NOMENCLATURE</scope>
    <source>
        <strain>cv. Columbia</strain>
    </source>
</reference>
<reference key="6">
    <citation type="journal article" date="2017" name="Plant Physiol.">
        <title>The IQD family of calmodulin-binding proteins links calcium signaling to microtubules, membrane subdomains, and the nucleus.</title>
        <authorList>
            <person name="Buerstenbinder K."/>
            <person name="Moeller B."/>
            <person name="Ploetner R."/>
            <person name="Stamm G."/>
            <person name="Hause G."/>
            <person name="Mitra D."/>
            <person name="Abel S."/>
        </authorList>
    </citation>
    <scope>FUNCTION</scope>
    <scope>SUBCELLULAR LOCATION</scope>
    <scope>TISSUE SPECIFICITY</scope>
    <source>
        <strain>cv. Columbia</strain>
    </source>
</reference>
<reference key="7">
    <citation type="journal article" date="2017" name="Plant Signal. Behav.">
        <title>Functions of IQD proteins as hubs in cellular calcium and auxin signaling: A toolbox for shape formation and tissue-specification in plants?</title>
        <authorList>
            <person name="Buerstenbinder K."/>
            <person name="Mitra D."/>
            <person name="Quegwer J."/>
        </authorList>
    </citation>
    <scope>REVIEW</scope>
</reference>
<accession>Q9LYR0</accession>
<proteinExistence type="evidence at protein level"/>
<dbReference type="EMBL" id="AL163572">
    <property type="protein sequence ID" value="CAB87153.1"/>
    <property type="molecule type" value="Genomic_DNA"/>
</dbReference>
<dbReference type="EMBL" id="CP002688">
    <property type="protein sequence ID" value="AED91897.1"/>
    <property type="molecule type" value="Genomic_DNA"/>
</dbReference>
<dbReference type="EMBL" id="AY054652">
    <property type="protein sequence ID" value="AAK96843.1"/>
    <property type="molecule type" value="mRNA"/>
</dbReference>
<dbReference type="EMBL" id="AY128736">
    <property type="protein sequence ID" value="AAM91136.1"/>
    <property type="molecule type" value="mRNA"/>
</dbReference>
<dbReference type="EMBL" id="AY086149">
    <property type="protein sequence ID" value="AAM63354.1"/>
    <property type="molecule type" value="mRNA"/>
</dbReference>
<dbReference type="PIR" id="T48593">
    <property type="entry name" value="T48593"/>
</dbReference>
<dbReference type="RefSeq" id="NP_196850.1">
    <property type="nucleotide sequence ID" value="NM_121349.4"/>
</dbReference>
<dbReference type="SMR" id="Q9LYR0"/>
<dbReference type="FunCoup" id="Q9LYR0">
    <property type="interactions" value="701"/>
</dbReference>
<dbReference type="STRING" id="3702.Q9LYR0"/>
<dbReference type="iPTMnet" id="Q9LYR0"/>
<dbReference type="PaxDb" id="3702-AT5G13460.1"/>
<dbReference type="ProteomicsDB" id="185027"/>
<dbReference type="EnsemblPlants" id="AT5G13460.1">
    <property type="protein sequence ID" value="AT5G13460.1"/>
    <property type="gene ID" value="AT5G13460"/>
</dbReference>
<dbReference type="GeneID" id="831188"/>
<dbReference type="Gramene" id="AT5G13460.1">
    <property type="protein sequence ID" value="AT5G13460.1"/>
    <property type="gene ID" value="AT5G13460"/>
</dbReference>
<dbReference type="KEGG" id="ath:AT5G13460"/>
<dbReference type="Araport" id="AT5G13460"/>
<dbReference type="TAIR" id="AT5G13460">
    <property type="gene designation" value="IQD11"/>
</dbReference>
<dbReference type="eggNOG" id="ENOG502QVDD">
    <property type="taxonomic scope" value="Eukaryota"/>
</dbReference>
<dbReference type="HOGENOM" id="CLU_024547_0_0_1"/>
<dbReference type="InParanoid" id="Q9LYR0"/>
<dbReference type="OMA" id="GDHDNTF"/>
<dbReference type="OrthoDB" id="696085at2759"/>
<dbReference type="PhylomeDB" id="Q9LYR0"/>
<dbReference type="PRO" id="PR:Q9LYR0"/>
<dbReference type="Proteomes" id="UP000006548">
    <property type="component" value="Chromosome 5"/>
</dbReference>
<dbReference type="ExpressionAtlas" id="Q9LYR0">
    <property type="expression patterns" value="baseline and differential"/>
</dbReference>
<dbReference type="GO" id="GO:0005737">
    <property type="term" value="C:cytoplasm"/>
    <property type="evidence" value="ECO:0007669"/>
    <property type="project" value="UniProtKB-KW"/>
</dbReference>
<dbReference type="GO" id="GO:0005856">
    <property type="term" value="C:cytoskeleton"/>
    <property type="evidence" value="ECO:0007669"/>
    <property type="project" value="UniProtKB-SubCell"/>
</dbReference>
<dbReference type="GO" id="GO:0005634">
    <property type="term" value="C:nucleus"/>
    <property type="evidence" value="ECO:0007669"/>
    <property type="project" value="UniProtKB-SubCell"/>
</dbReference>
<dbReference type="GO" id="GO:0005516">
    <property type="term" value="F:calmodulin binding"/>
    <property type="evidence" value="ECO:0007669"/>
    <property type="project" value="UniProtKB-KW"/>
</dbReference>
<dbReference type="CDD" id="cd23767">
    <property type="entry name" value="IQCD"/>
    <property type="match status" value="1"/>
</dbReference>
<dbReference type="FunFam" id="1.20.5.190:FF:000062">
    <property type="entry name" value="IQ-domain 11"/>
    <property type="match status" value="1"/>
</dbReference>
<dbReference type="Gene3D" id="1.20.5.190">
    <property type="match status" value="1"/>
</dbReference>
<dbReference type="InterPro" id="IPR025064">
    <property type="entry name" value="DUF4005"/>
</dbReference>
<dbReference type="InterPro" id="IPR000048">
    <property type="entry name" value="IQ_motif_EF-hand-BS"/>
</dbReference>
<dbReference type="PANTHER" id="PTHR32295">
    <property type="entry name" value="IQ-DOMAIN 5-RELATED"/>
    <property type="match status" value="1"/>
</dbReference>
<dbReference type="PANTHER" id="PTHR32295:SF41">
    <property type="entry name" value="PROTEIN IQ-DOMAIN 11"/>
    <property type="match status" value="1"/>
</dbReference>
<dbReference type="Pfam" id="PF13178">
    <property type="entry name" value="DUF4005"/>
    <property type="match status" value="1"/>
</dbReference>
<dbReference type="Pfam" id="PF00612">
    <property type="entry name" value="IQ"/>
    <property type="match status" value="2"/>
</dbReference>
<dbReference type="SMART" id="SM00015">
    <property type="entry name" value="IQ"/>
    <property type="match status" value="2"/>
</dbReference>
<dbReference type="PROSITE" id="PS50096">
    <property type="entry name" value="IQ"/>
    <property type="match status" value="2"/>
</dbReference>
<sequence>MAKKKGLFTVLKRIFISEVNSEKKEKRRKWTFWKLRIKKRLPSITAPPEHRTSHESHEEQKEEIVSDVGEISQVSCSRQLDSIEESKGSTSPETADLVVQYQMFLNRQEEVLAATRIQTAFRGHLARKALRALKGIVKLQAYIRGRAVRRQAMTTLKCLQSVVNIQSQVCGKRTQIPGGVHRDYEESNIFNDNILKVDTNGQKRWDDSLLTKEEKEAVVMSKKEASLRRERIKEYAVTHRKSAESYQKRSNTKWKYWLDEWVDTQLTKSKELEDLDFSSKTKPKDETLNEKQLKTPRNSSPRRLVNNHRRQVSIGEDEQSPAAVTITTPTYMVATESAKAKSRSLSSPRIRPRSFDTQSESYSPYKNKLCLTTSMMSEAPSKVRIANNGSNTRPSAYQQRSPGLRGFNIGPLKSCNNNNTLLNDLSINSERSLPSWNKQSSLR</sequence>
<comment type="function">
    <text evidence="1 5">May be involved in cooperative interactions with calmodulins or calmodulin-like proteins (By similarity). Recruits calmodulin proteins to microtubules, thus being a potential scaffold in cellular signaling and trafficking (PubMed:28115582). Regulates cell shape and elongation in aerial organs (i.e. epidermis pavement cells) probably by regulating cortical microtubules (MT) arrays orientation (PubMed:28115582). May associate with nucleic acids and regulate gene expression at the transcriptional or post-transcriptional level (By similarity).</text>
</comment>
<comment type="subunit">
    <text evidence="1">Binds to multiple calmodulin (CaM) in the presence of Ca(2+) and CaM-like proteins.</text>
</comment>
<comment type="subcellular location">
    <subcellularLocation>
        <location evidence="3">Nucleus</location>
    </subcellularLocation>
    <subcellularLocation>
        <location evidence="5">Cytoplasm</location>
        <location evidence="5">Cytoskeleton</location>
    </subcellularLocation>
</comment>
<comment type="tissue specificity">
    <text evidence="5">Expressed in hypocotyls, cotyledons, leaves and petioles.</text>
</comment>
<comment type="similarity">
    <text evidence="7">Belongs to the IQD family.</text>
</comment>
<keyword id="KW-0112">Calmodulin-binding</keyword>
<keyword id="KW-0963">Cytoplasm</keyword>
<keyword id="KW-0206">Cytoskeleton</keyword>
<keyword id="KW-0539">Nucleus</keyword>
<keyword id="KW-1185">Reference proteome</keyword>
<keyword id="KW-0677">Repeat</keyword>